<reference key="1">
    <citation type="journal article" date="1997" name="EMBO J.">
        <title>The gene for histone RNA hairpin binding protein is located on human chromosome 4 and encodes a novel type of RNA binding protein.</title>
        <authorList>
            <person name="Martin F."/>
            <person name="Schaller A."/>
            <person name="Eglite S."/>
            <person name="Schuemperli D."/>
            <person name="Mueller B."/>
        </authorList>
    </citation>
    <scope>NUCLEOTIDE SEQUENCE [MRNA]</scope>
</reference>
<reference key="2">
    <citation type="journal article" date="2002" name="Development">
        <title>The stem-loop binding protein CDL-1 is required for chromosome condensation, progression of cell death and morphogenesis in Caenorhabditis elegans.</title>
        <authorList>
            <person name="Kodama Y."/>
            <person name="Rothman J.H."/>
            <person name="Sugimoto A."/>
            <person name="Yamamoto M."/>
        </authorList>
    </citation>
    <scope>NUCLEOTIDE SEQUENCE [MRNA]</scope>
    <scope>FUNCTION</scope>
    <source>
        <strain>Bristol N2</strain>
    </source>
</reference>
<reference key="3">
    <citation type="journal article" date="1998" name="Science">
        <title>Genome sequence of the nematode C. elegans: a platform for investigating biology.</title>
        <authorList>
            <consortium name="The C. elegans sequencing consortium"/>
        </authorList>
    </citation>
    <scope>NUCLEOTIDE SEQUENCE [LARGE SCALE GENOMIC DNA]</scope>
    <source>
        <strain>Bristol N2</strain>
    </source>
</reference>
<reference key="4">
    <citation type="journal article" date="2017" name="Cell Cycle">
        <title>FEM1 proteins are ancient regulators of SLBP degradation.</title>
        <authorList>
            <person name="Dankert J.F."/>
            <person name="Pagan J.K."/>
            <person name="Starostina N.G."/>
            <person name="Kipreos E.T."/>
            <person name="Pagano M."/>
        </authorList>
    </citation>
    <scope>UBIQUITINATION</scope>
</reference>
<proteinExistence type="evidence at protein level"/>
<keyword id="KW-0507">mRNA processing</keyword>
<keyword id="KW-1185">Reference proteome</keyword>
<keyword id="KW-0694">RNA-binding</keyword>
<keyword id="KW-0832">Ubl conjugation</keyword>
<evidence type="ECO:0000250" key="1"/>
<evidence type="ECO:0000256" key="2">
    <source>
        <dbReference type="SAM" id="MobiDB-lite"/>
    </source>
</evidence>
<evidence type="ECO:0000269" key="3">
    <source>
    </source>
</evidence>
<evidence type="ECO:0000269" key="4">
    <source>
    </source>
</evidence>
<evidence type="ECO:0000305" key="5"/>
<comment type="function">
    <text evidence="3">Involved in histone pre-mRNA 3' processing (PubMed:11782412). Required for chromosome condensation, progression of cell death and morphogenesis (PubMed:11782412).</text>
</comment>
<comment type="PTM">
    <text evidence="4">Ubiquitinated by the CBC(fem-1) (Cul2-ElonginB-ElonginC) E3 ubiquitin-protein ligase complex, leading to its degradation.</text>
</comment>
<comment type="similarity">
    <text evidence="5">Belongs to the SLBP family.</text>
</comment>
<organism>
    <name type="scientific">Caenorhabditis elegans</name>
    <dbReference type="NCBI Taxonomy" id="6239"/>
    <lineage>
        <taxon>Eukaryota</taxon>
        <taxon>Metazoa</taxon>
        <taxon>Ecdysozoa</taxon>
        <taxon>Nematoda</taxon>
        <taxon>Chromadorea</taxon>
        <taxon>Rhabditida</taxon>
        <taxon>Rhabditina</taxon>
        <taxon>Rhabditomorpha</taxon>
        <taxon>Rhabditoidea</taxon>
        <taxon>Rhabditidae</taxon>
        <taxon>Peloderinae</taxon>
        <taxon>Caenorhabditis</taxon>
    </lineage>
</organism>
<name>SLBP_CAEEL</name>
<dbReference type="EMBL" id="Y10114">
    <property type="protein sequence ID" value="CAA71200.1"/>
    <property type="molecule type" value="mRNA"/>
</dbReference>
<dbReference type="EMBL" id="AB060649">
    <property type="protein sequence ID" value="BAB83255.1"/>
    <property type="molecule type" value="mRNA"/>
</dbReference>
<dbReference type="EMBL" id="Z46794">
    <property type="protein sequence ID" value="CAA86782.1"/>
    <property type="molecule type" value="Genomic_DNA"/>
</dbReference>
<dbReference type="PIR" id="T23983">
    <property type="entry name" value="T23983"/>
</dbReference>
<dbReference type="RefSeq" id="NP_496320.4">
    <property type="nucleotide sequence ID" value="NM_063919.7"/>
</dbReference>
<dbReference type="SMR" id="Q09599"/>
<dbReference type="BioGRID" id="39972">
    <property type="interactions" value="8"/>
</dbReference>
<dbReference type="FunCoup" id="Q09599">
    <property type="interactions" value="1833"/>
</dbReference>
<dbReference type="IntAct" id="Q09599">
    <property type="interactions" value="2"/>
</dbReference>
<dbReference type="STRING" id="6239.R06F6.1.1"/>
<dbReference type="iPTMnet" id="Q09599"/>
<dbReference type="PaxDb" id="6239-R06F6.1"/>
<dbReference type="PeptideAtlas" id="Q09599"/>
<dbReference type="EnsemblMetazoa" id="R06F6.1.1">
    <property type="protein sequence ID" value="R06F6.1.1"/>
    <property type="gene ID" value="WBGene00000411"/>
</dbReference>
<dbReference type="GeneID" id="174659"/>
<dbReference type="KEGG" id="cel:CELE_R06F6.1"/>
<dbReference type="UCSC" id="R06F6.1.1">
    <property type="organism name" value="c. elegans"/>
</dbReference>
<dbReference type="AGR" id="WB:WBGene00000411"/>
<dbReference type="CTD" id="174659"/>
<dbReference type="WormBase" id="R06F6.1">
    <property type="protein sequence ID" value="CE51537"/>
    <property type="gene ID" value="WBGene00000411"/>
    <property type="gene designation" value="cdl-1"/>
</dbReference>
<dbReference type="eggNOG" id="KOG3934">
    <property type="taxonomic scope" value="Eukaryota"/>
</dbReference>
<dbReference type="GeneTree" id="ENSGT00940000170890"/>
<dbReference type="HOGENOM" id="CLU_724098_0_0_1"/>
<dbReference type="InParanoid" id="Q09599"/>
<dbReference type="OMA" id="YEYCGEE"/>
<dbReference type="OrthoDB" id="265795at2759"/>
<dbReference type="Reactome" id="R-CEL-73856">
    <property type="pathway name" value="RNA Polymerase II Transcription Termination"/>
</dbReference>
<dbReference type="Reactome" id="R-CEL-77588">
    <property type="pathway name" value="SLBP Dependent Processing of Replication-Dependent Histone Pre-mRNAs"/>
</dbReference>
<dbReference type="PRO" id="PR:Q09599"/>
<dbReference type="Proteomes" id="UP000001940">
    <property type="component" value="Chromosome II"/>
</dbReference>
<dbReference type="Bgee" id="WBGene00000411">
    <property type="expression patterns" value="Expressed in embryo and 4 other cell types or tissues"/>
</dbReference>
<dbReference type="GO" id="GO:0005737">
    <property type="term" value="C:cytoplasm"/>
    <property type="evidence" value="ECO:0000318"/>
    <property type="project" value="GO_Central"/>
</dbReference>
<dbReference type="GO" id="GO:0071204">
    <property type="term" value="C:histone pre-mRNA 3'end processing complex"/>
    <property type="evidence" value="ECO:0000318"/>
    <property type="project" value="GO_Central"/>
</dbReference>
<dbReference type="GO" id="GO:0005634">
    <property type="term" value="C:nucleus"/>
    <property type="evidence" value="ECO:0000304"/>
    <property type="project" value="WormBase"/>
</dbReference>
<dbReference type="GO" id="GO:0071207">
    <property type="term" value="F:histone pre-mRNA stem-loop binding"/>
    <property type="evidence" value="ECO:0000318"/>
    <property type="project" value="GO_Central"/>
</dbReference>
<dbReference type="GO" id="GO:0003730">
    <property type="term" value="F:mRNA 3'-UTR binding"/>
    <property type="evidence" value="ECO:0000314"/>
    <property type="project" value="WormBase"/>
</dbReference>
<dbReference type="GO" id="GO:0003729">
    <property type="term" value="F:mRNA binding"/>
    <property type="evidence" value="ECO:0000318"/>
    <property type="project" value="GO_Central"/>
</dbReference>
<dbReference type="GO" id="GO:0006915">
    <property type="term" value="P:apoptotic process"/>
    <property type="evidence" value="ECO:0000315"/>
    <property type="project" value="WormBase"/>
</dbReference>
<dbReference type="GO" id="GO:0009792">
    <property type="term" value="P:embryo development ending in birth or egg hatching"/>
    <property type="evidence" value="ECO:0000315"/>
    <property type="project" value="WormBase"/>
</dbReference>
<dbReference type="GO" id="GO:0007076">
    <property type="term" value="P:mitotic chromosome condensation"/>
    <property type="evidence" value="ECO:0000315"/>
    <property type="project" value="WormBase"/>
</dbReference>
<dbReference type="GO" id="GO:0006398">
    <property type="term" value="P:mRNA 3'-end processing by stem-loop binding and cleavage"/>
    <property type="evidence" value="ECO:0000318"/>
    <property type="project" value="GO_Central"/>
</dbReference>
<dbReference type="GO" id="GO:0051028">
    <property type="term" value="P:mRNA transport"/>
    <property type="evidence" value="ECO:0000318"/>
    <property type="project" value="GO_Central"/>
</dbReference>
<dbReference type="FunFam" id="1.10.8.1120:FF:000001">
    <property type="entry name" value="Histone RNA hairpin-binding protein-like"/>
    <property type="match status" value="1"/>
</dbReference>
<dbReference type="Gene3D" id="1.10.8.1120">
    <property type="entry name" value="Histone RNA hairpin-binding protein RNA-binding domain"/>
    <property type="match status" value="1"/>
</dbReference>
<dbReference type="InterPro" id="IPR026502">
    <property type="entry name" value="SLBP1/SLBP2"/>
</dbReference>
<dbReference type="InterPro" id="IPR029344">
    <property type="entry name" value="SLBP_RNA_bind"/>
</dbReference>
<dbReference type="InterPro" id="IPR038294">
    <property type="entry name" value="SLBP_RNA_bind_sf"/>
</dbReference>
<dbReference type="PANTHER" id="PTHR17408">
    <property type="entry name" value="HISTONE RNA HAIRPIN-BINDING PROTEIN"/>
    <property type="match status" value="1"/>
</dbReference>
<dbReference type="PANTHER" id="PTHR17408:SF0">
    <property type="entry name" value="HISTONE RNA HAIRPIN-BINDING PROTEIN"/>
    <property type="match status" value="1"/>
</dbReference>
<dbReference type="Pfam" id="PF15247">
    <property type="entry name" value="SLBP_RNA_bind"/>
    <property type="match status" value="1"/>
</dbReference>
<feature type="chain" id="PRO_0000100360" description="Histone RNA hairpin-binding protein">
    <location>
        <begin position="1"/>
        <end position="367"/>
    </location>
</feature>
<feature type="region of interest" description="Disordered" evidence="2">
    <location>
        <begin position="1"/>
        <end position="24"/>
    </location>
</feature>
<feature type="region of interest" description="Disordered" evidence="2">
    <location>
        <begin position="49"/>
        <end position="200"/>
    </location>
</feature>
<feature type="region of interest" description="RNA-binding" evidence="1">
    <location>
        <begin position="206"/>
        <end position="275"/>
    </location>
</feature>
<feature type="region of interest" description="Disordered" evidence="2">
    <location>
        <begin position="342"/>
        <end position="367"/>
    </location>
</feature>
<feature type="compositionally biased region" description="Polar residues" evidence="2">
    <location>
        <begin position="1"/>
        <end position="12"/>
    </location>
</feature>
<feature type="compositionally biased region" description="Basic and acidic residues" evidence="2">
    <location>
        <begin position="57"/>
        <end position="73"/>
    </location>
</feature>
<feature type="compositionally biased region" description="Polar residues" evidence="2">
    <location>
        <begin position="147"/>
        <end position="156"/>
    </location>
</feature>
<feature type="compositionally biased region" description="Low complexity" evidence="2">
    <location>
        <begin position="183"/>
        <end position="192"/>
    </location>
</feature>
<feature type="compositionally biased region" description="Polar residues" evidence="2">
    <location>
        <begin position="347"/>
        <end position="356"/>
    </location>
</feature>
<sequence length="367" mass="41481">MAQKTPTKGTRSSPRKKAWGSPIKATAKFQSDIFSVEDFADLSNRSWAEVTEEDDELASRLEEERRCKSESRRKGQPKRAQNSQNKPKFVRSLELTNEVFQSTSSRRSQRSKSRTRNGDTITTVEEHTETVVMESSSGPISRKRCLSNASTINEGASPSKRRPETGKSNRKAPRGRLFTNGGSDSSSVASSPSRRDHWEEPTLGWCTDEAVLKRRSREIDRAKEKAVYQRYTSEVPLRDRIKGQHPRTPNKLINFSRRSWDTQIKKWKRSLYEYCGEEPSDSVNTSFCYSDSDALSEAGDNDKEIENRSVLRDLVIPVTMRPEVDSMASLLGKFDVDSQMGMDESTLKASTNTDPSAPTDFSKMSSH</sequence>
<protein>
    <recommendedName>
        <fullName>Histone RNA hairpin-binding protein</fullName>
    </recommendedName>
    <alternativeName>
        <fullName>Histone stem-loop-binding protein</fullName>
    </alternativeName>
</protein>
<accession>Q09599</accession>
<gene>
    <name type="primary">cdl-1</name>
    <name type="ORF">R06F6.1</name>
</gene>